<evidence type="ECO:0000255" key="1">
    <source>
        <dbReference type="HAMAP-Rule" id="MF_00251"/>
    </source>
</evidence>
<evidence type="ECO:0000305" key="2"/>
<feature type="chain" id="PRO_1000101002" description="Large ribosomal subunit protein bL36">
    <location>
        <begin position="1"/>
        <end position="37"/>
    </location>
</feature>
<gene>
    <name evidence="1" type="primary">rpmJ</name>
    <name type="ordered locus">BDU_502</name>
</gene>
<organism>
    <name type="scientific">Borrelia duttonii (strain Ly)</name>
    <dbReference type="NCBI Taxonomy" id="412419"/>
    <lineage>
        <taxon>Bacteria</taxon>
        <taxon>Pseudomonadati</taxon>
        <taxon>Spirochaetota</taxon>
        <taxon>Spirochaetia</taxon>
        <taxon>Spirochaetales</taxon>
        <taxon>Borreliaceae</taxon>
        <taxon>Borrelia</taxon>
    </lineage>
</organism>
<name>RL36_BORDL</name>
<reference key="1">
    <citation type="journal article" date="2008" name="PLoS Genet.">
        <title>The genome of Borrelia recurrentis, the agent of deadly louse-borne relapsing fever, is a degraded subset of tick-borne Borrelia duttonii.</title>
        <authorList>
            <person name="Lescot M."/>
            <person name="Audic S."/>
            <person name="Robert C."/>
            <person name="Nguyen T.T."/>
            <person name="Blanc G."/>
            <person name="Cutler S.J."/>
            <person name="Wincker P."/>
            <person name="Couloux A."/>
            <person name="Claverie J.-M."/>
            <person name="Raoult D."/>
            <person name="Drancourt M."/>
        </authorList>
    </citation>
    <scope>NUCLEOTIDE SEQUENCE [LARGE SCALE GENOMIC DNA]</scope>
    <source>
        <strain>Ly</strain>
    </source>
</reference>
<protein>
    <recommendedName>
        <fullName evidence="1">Large ribosomal subunit protein bL36</fullName>
    </recommendedName>
    <alternativeName>
        <fullName evidence="2">50S ribosomal protein L36</fullName>
    </alternativeName>
</protein>
<sequence length="37" mass="4405">MKVRVSVKPICEKCKVIKRKGVLRIICDNLKHKQRQK</sequence>
<proteinExistence type="inferred from homology"/>
<accession>B5RM57</accession>
<keyword id="KW-0687">Ribonucleoprotein</keyword>
<keyword id="KW-0689">Ribosomal protein</keyword>
<comment type="similarity">
    <text evidence="1">Belongs to the bacterial ribosomal protein bL36 family.</text>
</comment>
<dbReference type="EMBL" id="CP000976">
    <property type="protein sequence ID" value="ACH93443.1"/>
    <property type="molecule type" value="Genomic_DNA"/>
</dbReference>
<dbReference type="RefSeq" id="WP_002557090.1">
    <property type="nucleotide sequence ID" value="NC_011229.1"/>
</dbReference>
<dbReference type="SMR" id="B5RM57"/>
<dbReference type="STRING" id="412419.BDU_502"/>
<dbReference type="GeneID" id="71843317"/>
<dbReference type="KEGG" id="bdu:BDU_502"/>
<dbReference type="eggNOG" id="COG0257">
    <property type="taxonomic scope" value="Bacteria"/>
</dbReference>
<dbReference type="HOGENOM" id="CLU_135723_6_2_12"/>
<dbReference type="OrthoDB" id="9802520at2"/>
<dbReference type="Proteomes" id="UP000000611">
    <property type="component" value="Chromosome"/>
</dbReference>
<dbReference type="GO" id="GO:0005737">
    <property type="term" value="C:cytoplasm"/>
    <property type="evidence" value="ECO:0007669"/>
    <property type="project" value="UniProtKB-ARBA"/>
</dbReference>
<dbReference type="GO" id="GO:1990904">
    <property type="term" value="C:ribonucleoprotein complex"/>
    <property type="evidence" value="ECO:0007669"/>
    <property type="project" value="UniProtKB-KW"/>
</dbReference>
<dbReference type="GO" id="GO:0005840">
    <property type="term" value="C:ribosome"/>
    <property type="evidence" value="ECO:0007669"/>
    <property type="project" value="UniProtKB-KW"/>
</dbReference>
<dbReference type="GO" id="GO:0003735">
    <property type="term" value="F:structural constituent of ribosome"/>
    <property type="evidence" value="ECO:0007669"/>
    <property type="project" value="InterPro"/>
</dbReference>
<dbReference type="GO" id="GO:0006412">
    <property type="term" value="P:translation"/>
    <property type="evidence" value="ECO:0007669"/>
    <property type="project" value="UniProtKB-UniRule"/>
</dbReference>
<dbReference type="HAMAP" id="MF_00251">
    <property type="entry name" value="Ribosomal_bL36"/>
    <property type="match status" value="1"/>
</dbReference>
<dbReference type="InterPro" id="IPR000473">
    <property type="entry name" value="Ribosomal_bL36"/>
</dbReference>
<dbReference type="InterPro" id="IPR035977">
    <property type="entry name" value="Ribosomal_bL36_sp"/>
</dbReference>
<dbReference type="NCBIfam" id="TIGR01022">
    <property type="entry name" value="rpmJ_bact"/>
    <property type="match status" value="1"/>
</dbReference>
<dbReference type="PANTHER" id="PTHR42888">
    <property type="entry name" value="50S RIBOSOMAL PROTEIN L36, CHLOROPLASTIC"/>
    <property type="match status" value="1"/>
</dbReference>
<dbReference type="PANTHER" id="PTHR42888:SF1">
    <property type="entry name" value="LARGE RIBOSOMAL SUBUNIT PROTEIN BL36C"/>
    <property type="match status" value="1"/>
</dbReference>
<dbReference type="Pfam" id="PF00444">
    <property type="entry name" value="Ribosomal_L36"/>
    <property type="match status" value="1"/>
</dbReference>
<dbReference type="SUPFAM" id="SSF57840">
    <property type="entry name" value="Ribosomal protein L36"/>
    <property type="match status" value="1"/>
</dbReference>
<dbReference type="PROSITE" id="PS00828">
    <property type="entry name" value="RIBOSOMAL_L36"/>
    <property type="match status" value="1"/>
</dbReference>